<organism>
    <name type="scientific">Escherichia coli (strain K12)</name>
    <dbReference type="NCBI Taxonomy" id="83333"/>
    <lineage>
        <taxon>Bacteria</taxon>
        <taxon>Pseudomonadati</taxon>
        <taxon>Pseudomonadota</taxon>
        <taxon>Gammaproteobacteria</taxon>
        <taxon>Enterobacterales</taxon>
        <taxon>Enterobacteriaceae</taxon>
        <taxon>Escherichia</taxon>
    </lineage>
</organism>
<gene>
    <name type="primary">gspE</name>
    <name type="synonym">yheG</name>
    <name type="ordered locus">b3326</name>
    <name type="ordered locus">JW3288</name>
</gene>
<accession>P45759</accession>
<accession>Q2M6Z1</accession>
<protein>
    <recommendedName>
        <fullName>Putative type II secretion system protein E</fullName>
        <shortName>T2SS protein E</shortName>
        <ecNumber evidence="1">7.4.2.8</ecNumber>
    </recommendedName>
    <alternativeName>
        <fullName>Putative general secretion pathway protein E</fullName>
    </alternativeName>
    <alternativeName>
        <fullName>Type II traffic warden ATPase</fullName>
    </alternativeName>
</protein>
<dbReference type="EC" id="7.4.2.8" evidence="1"/>
<dbReference type="EMBL" id="U18997">
    <property type="protein sequence ID" value="AAA58123.1"/>
    <property type="molecule type" value="Genomic_DNA"/>
</dbReference>
<dbReference type="EMBL" id="U00096">
    <property type="protein sequence ID" value="AAC76351.1"/>
    <property type="molecule type" value="Genomic_DNA"/>
</dbReference>
<dbReference type="EMBL" id="AP009048">
    <property type="protein sequence ID" value="BAE77965.1"/>
    <property type="molecule type" value="Genomic_DNA"/>
</dbReference>
<dbReference type="PIR" id="A65126">
    <property type="entry name" value="A65126"/>
</dbReference>
<dbReference type="RefSeq" id="NP_417785.1">
    <property type="nucleotide sequence ID" value="NC_000913.3"/>
</dbReference>
<dbReference type="RefSeq" id="WP_001219894.1">
    <property type="nucleotide sequence ID" value="NZ_SSZK01000040.1"/>
</dbReference>
<dbReference type="SMR" id="P45759"/>
<dbReference type="BioGRID" id="4261298">
    <property type="interactions" value="332"/>
</dbReference>
<dbReference type="BioGRID" id="852135">
    <property type="interactions" value="1"/>
</dbReference>
<dbReference type="FunCoup" id="P45759">
    <property type="interactions" value="421"/>
</dbReference>
<dbReference type="IntAct" id="P45759">
    <property type="interactions" value="1"/>
</dbReference>
<dbReference type="STRING" id="511145.b3326"/>
<dbReference type="PaxDb" id="511145-b3326"/>
<dbReference type="EnsemblBacteria" id="AAC76351">
    <property type="protein sequence ID" value="AAC76351"/>
    <property type="gene ID" value="b3326"/>
</dbReference>
<dbReference type="GeneID" id="947823"/>
<dbReference type="KEGG" id="ecj:JW3288"/>
<dbReference type="KEGG" id="eco:b3326"/>
<dbReference type="KEGG" id="ecoc:C3026_18070"/>
<dbReference type="PATRIC" id="fig|1411691.4.peg.3405"/>
<dbReference type="EchoBASE" id="EB2728"/>
<dbReference type="eggNOG" id="COG2804">
    <property type="taxonomic scope" value="Bacteria"/>
</dbReference>
<dbReference type="HOGENOM" id="CLU_013446_10_3_6"/>
<dbReference type="InParanoid" id="P45759"/>
<dbReference type="OMA" id="PHCKREE"/>
<dbReference type="OrthoDB" id="9804785at2"/>
<dbReference type="PhylomeDB" id="P45759"/>
<dbReference type="BioCyc" id="EcoCyc:G7704-MONOMER"/>
<dbReference type="BioCyc" id="MetaCyc:G7704-MONOMER"/>
<dbReference type="PRO" id="PR:P45759"/>
<dbReference type="Proteomes" id="UP000000625">
    <property type="component" value="Chromosome"/>
</dbReference>
<dbReference type="GO" id="GO:0005886">
    <property type="term" value="C:plasma membrane"/>
    <property type="evidence" value="ECO:0000318"/>
    <property type="project" value="GO_Central"/>
</dbReference>
<dbReference type="GO" id="GO:0015627">
    <property type="term" value="C:type II protein secretion system complex"/>
    <property type="evidence" value="ECO:0000318"/>
    <property type="project" value="GO_Central"/>
</dbReference>
<dbReference type="GO" id="GO:0005524">
    <property type="term" value="F:ATP binding"/>
    <property type="evidence" value="ECO:0007669"/>
    <property type="project" value="UniProtKB-KW"/>
</dbReference>
<dbReference type="GO" id="GO:0016887">
    <property type="term" value="F:ATP hydrolysis activity"/>
    <property type="evidence" value="ECO:0000318"/>
    <property type="project" value="GO_Central"/>
</dbReference>
<dbReference type="GO" id="GO:0046872">
    <property type="term" value="F:metal ion binding"/>
    <property type="evidence" value="ECO:0007669"/>
    <property type="project" value="UniProtKB-KW"/>
</dbReference>
<dbReference type="GO" id="GO:0008564">
    <property type="term" value="F:protein-exporting ATPase activity"/>
    <property type="evidence" value="ECO:0007669"/>
    <property type="project" value="UniProtKB-EC"/>
</dbReference>
<dbReference type="GO" id="GO:0015628">
    <property type="term" value="P:protein secretion by the type II secretion system"/>
    <property type="evidence" value="ECO:0000318"/>
    <property type="project" value="GO_Central"/>
</dbReference>
<dbReference type="CDD" id="cd01129">
    <property type="entry name" value="PulE-GspE-like"/>
    <property type="match status" value="1"/>
</dbReference>
<dbReference type="FunFam" id="3.30.450.90:FF:000001">
    <property type="entry name" value="Type II secretion system ATPase GspE"/>
    <property type="match status" value="1"/>
</dbReference>
<dbReference type="FunFam" id="3.40.50.300:FF:000398">
    <property type="entry name" value="Type IV pilus assembly ATPase PilB"/>
    <property type="match status" value="1"/>
</dbReference>
<dbReference type="Gene3D" id="3.30.450.90">
    <property type="match status" value="1"/>
</dbReference>
<dbReference type="Gene3D" id="3.40.50.300">
    <property type="entry name" value="P-loop containing nucleotide triphosphate hydrolases"/>
    <property type="match status" value="1"/>
</dbReference>
<dbReference type="Gene3D" id="3.30.300.160">
    <property type="entry name" value="Type II secretion system, protein E, N-terminal domain"/>
    <property type="match status" value="1"/>
</dbReference>
<dbReference type="InterPro" id="IPR003593">
    <property type="entry name" value="AAA+_ATPase"/>
</dbReference>
<dbReference type="InterPro" id="IPR027417">
    <property type="entry name" value="P-loop_NTPase"/>
</dbReference>
<dbReference type="InterPro" id="IPR001482">
    <property type="entry name" value="T2SS/T4SS_dom"/>
</dbReference>
<dbReference type="InterPro" id="IPR037257">
    <property type="entry name" value="T2SS_E_N_sf"/>
</dbReference>
<dbReference type="InterPro" id="IPR013369">
    <property type="entry name" value="T2SS_GspE"/>
</dbReference>
<dbReference type="NCBIfam" id="TIGR02533">
    <property type="entry name" value="type_II_gspE"/>
    <property type="match status" value="1"/>
</dbReference>
<dbReference type="PANTHER" id="PTHR30258:SF27">
    <property type="entry name" value="BACTERIOPHAGE ADSORPTION PROTEIN B-RELATED"/>
    <property type="match status" value="1"/>
</dbReference>
<dbReference type="PANTHER" id="PTHR30258">
    <property type="entry name" value="TYPE II SECRETION SYSTEM PROTEIN GSPE-RELATED"/>
    <property type="match status" value="1"/>
</dbReference>
<dbReference type="Pfam" id="PF00437">
    <property type="entry name" value="T2SSE"/>
    <property type="match status" value="1"/>
</dbReference>
<dbReference type="SMART" id="SM00382">
    <property type="entry name" value="AAA"/>
    <property type="match status" value="1"/>
</dbReference>
<dbReference type="SUPFAM" id="SSF52540">
    <property type="entry name" value="P-loop containing nucleoside triphosphate hydrolases"/>
    <property type="match status" value="1"/>
</dbReference>
<dbReference type="PROSITE" id="PS00662">
    <property type="entry name" value="T2SP_E"/>
    <property type="match status" value="1"/>
</dbReference>
<evidence type="ECO:0000250" key="1">
    <source>
        <dbReference type="UniProtKB" id="P37093"/>
    </source>
</evidence>
<evidence type="ECO:0000250" key="2">
    <source>
        <dbReference type="UniProtKB" id="Q00512"/>
    </source>
</evidence>
<evidence type="ECO:0000255" key="3"/>
<evidence type="ECO:0000269" key="4">
    <source>
    </source>
</evidence>
<evidence type="ECO:0000305" key="5"/>
<keyword id="KW-0067">ATP-binding</keyword>
<keyword id="KW-0997">Cell inner membrane</keyword>
<keyword id="KW-1003">Cell membrane</keyword>
<keyword id="KW-0472">Membrane</keyword>
<keyword id="KW-0479">Metal-binding</keyword>
<keyword id="KW-0547">Nucleotide-binding</keyword>
<keyword id="KW-0653">Protein transport</keyword>
<keyword id="KW-1185">Reference proteome</keyword>
<keyword id="KW-1278">Translocase</keyword>
<keyword id="KW-0813">Transport</keyword>
<keyword id="KW-0862">Zinc</keyword>
<reference key="1">
    <citation type="journal article" date="1997" name="Science">
        <title>The complete genome sequence of Escherichia coli K-12.</title>
        <authorList>
            <person name="Blattner F.R."/>
            <person name="Plunkett G. III"/>
            <person name="Bloch C.A."/>
            <person name="Perna N.T."/>
            <person name="Burland V."/>
            <person name="Riley M."/>
            <person name="Collado-Vides J."/>
            <person name="Glasner J.D."/>
            <person name="Rode C.K."/>
            <person name="Mayhew G.F."/>
            <person name="Gregor J."/>
            <person name="Davis N.W."/>
            <person name="Kirkpatrick H.A."/>
            <person name="Goeden M.A."/>
            <person name="Rose D.J."/>
            <person name="Mau B."/>
            <person name="Shao Y."/>
        </authorList>
    </citation>
    <scope>NUCLEOTIDE SEQUENCE [LARGE SCALE GENOMIC DNA]</scope>
    <source>
        <strain>K12 / MG1655 / ATCC 47076</strain>
    </source>
</reference>
<reference key="2">
    <citation type="journal article" date="2006" name="Mol. Syst. Biol.">
        <title>Highly accurate genome sequences of Escherichia coli K-12 strains MG1655 and W3110.</title>
        <authorList>
            <person name="Hayashi K."/>
            <person name="Morooka N."/>
            <person name="Yamamoto Y."/>
            <person name="Fujita K."/>
            <person name="Isono K."/>
            <person name="Choi S."/>
            <person name="Ohtsubo E."/>
            <person name="Baba T."/>
            <person name="Wanner B.L."/>
            <person name="Mori H."/>
            <person name="Horiuchi T."/>
        </authorList>
    </citation>
    <scope>NUCLEOTIDE SEQUENCE [LARGE SCALE GENOMIC DNA]</scope>
    <source>
        <strain>K12 / W3110 / ATCC 27325 / DSM 5911</strain>
    </source>
</reference>
<reference key="3">
    <citation type="journal article" date="1996" name="J. Bacteriol.">
        <title>The cryptic general secretory pathway (gsp) operon of Escherichia coli K-12 encodes functional proteins.</title>
        <authorList>
            <person name="Francetic O."/>
            <person name="Pugsley A.P."/>
        </authorList>
    </citation>
    <scope>LACK OF EXPRESSION</scope>
    <source>
        <strain>K12 / MC4100 / ATCC 35695 / DSM 6574</strain>
    </source>
</reference>
<reference key="4">
    <citation type="journal article" date="2000" name="EMBO J.">
        <title>Expression of the endogenous type II secretion pathway in Escherichia coli leads to chitinase secretion.</title>
        <authorList>
            <person name="Francetic O."/>
            <person name="Belin D."/>
            <person name="Badaut C."/>
            <person name="Pugsley A.P."/>
        </authorList>
    </citation>
    <scope>LACK OF EXPRESSION</scope>
    <scope>TRANSCRIPTIONAL REGULATION</scope>
    <source>
        <strain>K12 / MC4100 / ATCC 35695 / DSM 6574</strain>
    </source>
</reference>
<name>GSPE_ECOLI</name>
<sequence>MRIHSPYPASWALAQRIGYLYSEGEIIYLADTPFERLLDIQRQVGQCQTMTSLSQADFEARLEAVFHQNTGESQQIAQDIDQSVDLLSLSEEMPANEDLLNEDSAAPVIRLINAILSEAIKETASDIHIETYEKTMSIRFRIDGVLRTILQPNKKLAALLISRIKVMARLDIAEKRIPQDGRISLRIGRRNIDVRVSTLPSIYGERAVLRLLDKNSLQLSLNNLGMTAADKQDLENLIQLPHGIILVTGPTGSGKSTTLYAILSALNTPGRNILTVEDPVEYELEGIGQTQVNTRVDMSFARGLRAILRQDPDVVMVGEIRDTETAQIAVQASLTGHLVLSTLHTNSASGAVTRLRDMGVESFLLSSSLAGIIAQRLVRRLCPQCRQFTPVSPQQAQMFKYHQLAVTTIGTPVGCPHCHQSGYQGRMAIHEMMVVTPELRAAIHENVDEQALERLVRQQHKALIKNGLQKVISGDTSWDEVMRVASATLESEA</sequence>
<feature type="chain" id="PRO_0000207284" description="Putative type II secretion system protein E">
    <location>
        <begin position="1"/>
        <end position="493"/>
    </location>
</feature>
<feature type="binding site" evidence="3">
    <location>
        <begin position="249"/>
        <end position="256"/>
    </location>
    <ligand>
        <name>ATP</name>
        <dbReference type="ChEBI" id="CHEBI:30616"/>
    </ligand>
</feature>
<feature type="binding site" evidence="1">
    <location>
        <position position="382"/>
    </location>
    <ligand>
        <name>Zn(2+)</name>
        <dbReference type="ChEBI" id="CHEBI:29105"/>
    </ligand>
</feature>
<feature type="binding site" evidence="1">
    <location>
        <position position="385"/>
    </location>
    <ligand>
        <name>Zn(2+)</name>
        <dbReference type="ChEBI" id="CHEBI:29105"/>
    </ligand>
</feature>
<feature type="binding site" evidence="1">
    <location>
        <position position="415"/>
    </location>
    <ligand>
        <name>Zn(2+)</name>
        <dbReference type="ChEBI" id="CHEBI:29105"/>
    </ligand>
</feature>
<feature type="binding site" evidence="1">
    <location>
        <position position="418"/>
    </location>
    <ligand>
        <name>Zn(2+)</name>
        <dbReference type="ChEBI" id="CHEBI:29105"/>
    </ligand>
</feature>
<comment type="function">
    <text evidence="2">ATPase component of the type II secretion system required for the energy-dependent secretion of extracellular factors such as proteases and toxins from the periplasm. Acts as a molecular motor to provide the energy that is required for assembly of the pseudopilus and the extrusion of substrates generated in the cytoplasm.</text>
</comment>
<comment type="catalytic activity">
    <reaction evidence="1">
        <text>ATP + H2O + cellular proteinSide 1 = ADP + phosphate + cellular proteinSide 2.</text>
        <dbReference type="EC" id="7.4.2.8"/>
    </reaction>
</comment>
<comment type="cofactor">
    <cofactor evidence="1">
        <name>Zn(2+)</name>
        <dbReference type="ChEBI" id="CHEBI:29105"/>
    </cofactor>
</comment>
<comment type="subunit">
    <text evidence="1 2">Forms homooligomers; most probably hexamers (By similarity). Interacts with GspL (By similarity).</text>
</comment>
<comment type="interaction">
    <interactant intactId="EBI-1132437">
        <id>P45759</id>
    </interactant>
    <interactant intactId="EBI-543515">
        <id>P60422</id>
        <label>rplB</label>
    </interactant>
    <organismsDiffer>false</organismsDiffer>
    <experiments>2</experiments>
</comment>
<comment type="subcellular location">
    <subcellularLocation>
        <location evidence="2">Cell inner membrane</location>
    </subcellularLocation>
    <text evidence="2">Membrane association is not an intrinsic property but requires the GspL gene product.</text>
</comment>
<comment type="induction">
    <text evidence="4">Silenced by the DNA-binding protein H-NS under standard growth conditions.</text>
</comment>
<comment type="miscellaneous">
    <text>Part of a cryptic operon that encodes proteins involved in type II secretion machinery in other organisms, but is not expressed in strain K12.</text>
</comment>
<comment type="similarity">
    <text evidence="5">Belongs to the GSP E family.</text>
</comment>
<proteinExistence type="evidence at protein level"/>